<organism>
    <name type="scientific">Bacillus sp. (strain TB-90)</name>
    <dbReference type="NCBI Taxonomy" id="36824"/>
    <lineage>
        <taxon>Bacteria</taxon>
        <taxon>Bacillati</taxon>
        <taxon>Bacillota</taxon>
        <taxon>Bacilli</taxon>
        <taxon>Bacillales</taxon>
        <taxon>Bacillaceae</taxon>
        <taxon>Bacillus</taxon>
    </lineage>
</organism>
<name>PUCL_BACSB</name>
<sequence length="502" mass="57978">MMRLKQLNEMSASEFIHLLGGVFENSSWVAERAEPNRPYSSFQSLYNKMVEIVETASDNEQLKLIQMHPHLGTNVKITDFSQEEQKHAGLNELTKDEQNHLILLNQKYKDKFGFPFVMAVRGKIKQEIFRTIKERLQNNHQTEFKQALEEIKKIAMFRLQEIFREGENNSMTKHKERVMYYGKGDVFAYRTYLKPLTGVRTIPESPFSGRDHILFGVNVKISVGGTKLLTSFTKGDNSLVVATDSMKNFIQKHLASYTGTTIEGFLEYVATSFLKKYSHIEKISLIGEEIPFETTFAVKNGNRAASELVFKKSRNEYATAYLNMVRNEDNTLNITEQQSGLAGLQLIKVSGNSFVGFIRDEYTTLPEDSNRPLFVYLNIKWKYKNTEDSFGTNPENYVAAEQIRDIATSVFHETETLSIQHLIYLIGRRILERFPQLQEVYFESQNHTWDKIVEEIPESEGKVYTEPRPPYGFQCFTVTQEDLPHENILMFSDEPDHKGALK</sequence>
<accession>Q45697</accession>
<accession>Q9F1Q5</accession>
<feature type="chain" id="PRO_0000166005" description="Uric acid degradation bifunctional protein">
    <location>
        <begin position="1"/>
        <end position="502"/>
    </location>
</feature>
<feature type="region of interest" description="OHCU decarboxylase">
    <location>
        <begin position="1"/>
        <end position="178"/>
    </location>
</feature>
<feature type="region of interest" description="Urate oxidase">
    <location>
        <begin position="179"/>
        <end position="502"/>
    </location>
</feature>
<feature type="active site" description="Proton donor; for OHCU decarboxylase activity" evidence="1">
    <location>
        <position position="68"/>
    </location>
</feature>
<feature type="active site" description="Charge relay system; for urate oxidase activity" evidence="2">
    <location>
        <position position="183"/>
    </location>
</feature>
<feature type="active site" description="Charge relay system" evidence="3">
    <location>
        <position position="194"/>
    </location>
</feature>
<feature type="active site" description="Charge relay system; for urate oxidase activity" evidence="2">
    <location>
        <position position="243"/>
    </location>
</feature>
<feature type="binding site" evidence="1">
    <location>
        <position position="69"/>
    </location>
    <ligand>
        <name>5-hydroxy-2-oxo-4-ureido-2,5-dihydro-1H-imidazole-5-carboxylate</name>
        <dbReference type="ChEBI" id="CHEBI:58639"/>
    </ligand>
</feature>
<feature type="binding site" evidence="1">
    <location>
        <begin position="81"/>
        <end position="85"/>
    </location>
    <ligand>
        <name>5-hydroxy-2-oxo-4-ureido-2,5-dihydro-1H-imidazole-5-carboxylate</name>
        <dbReference type="ChEBI" id="CHEBI:58639"/>
    </ligand>
</feature>
<feature type="binding site" evidence="1">
    <location>
        <begin position="116"/>
        <end position="120"/>
    </location>
    <ligand>
        <name>5-hydroxy-2-oxo-4-ureido-2,5-dihydro-1H-imidazole-5-carboxylate</name>
        <dbReference type="ChEBI" id="CHEBI:58639"/>
    </ligand>
</feature>
<feature type="binding site" evidence="3">
    <location>
        <position position="243"/>
    </location>
    <ligand>
        <name>urate</name>
        <dbReference type="ChEBI" id="CHEBI:17775"/>
    </ligand>
</feature>
<feature type="binding site" evidence="3">
    <location>
        <position position="244"/>
    </location>
    <ligand>
        <name>urate</name>
        <dbReference type="ChEBI" id="CHEBI:17775"/>
    </ligand>
</feature>
<feature type="binding site" evidence="5">
    <location>
        <position position="354"/>
    </location>
    <ligand>
        <name>urate</name>
        <dbReference type="ChEBI" id="CHEBI:17775"/>
    </ligand>
</feature>
<feature type="binding site" evidence="5">
    <location>
        <position position="371"/>
    </location>
    <ligand>
        <name>urate</name>
        <dbReference type="ChEBI" id="CHEBI:17775"/>
    </ligand>
</feature>
<feature type="binding site" evidence="3">
    <location>
        <position position="419"/>
    </location>
    <ligand>
        <name>urate</name>
        <dbReference type="ChEBI" id="CHEBI:17775"/>
    </ligand>
</feature>
<feature type="binding site" evidence="3">
    <location>
        <position position="420"/>
    </location>
    <ligand>
        <name>urate</name>
        <dbReference type="ChEBI" id="CHEBI:17775"/>
    </ligand>
</feature>
<feature type="binding site" evidence="3">
    <location>
        <position position="446"/>
    </location>
    <ligand>
        <name>urate</name>
        <dbReference type="ChEBI" id="CHEBI:17775"/>
    </ligand>
</feature>
<feature type="strand" evidence="6">
    <location>
        <begin position="179"/>
        <end position="192"/>
    </location>
</feature>
<feature type="strand" evidence="6">
    <location>
        <begin position="213"/>
        <end position="224"/>
    </location>
</feature>
<feature type="helix" evidence="6">
    <location>
        <begin position="226"/>
        <end position="228"/>
    </location>
</feature>
<feature type="helix" evidence="6">
    <location>
        <begin position="229"/>
        <end position="233"/>
    </location>
</feature>
<feature type="helix" evidence="6">
    <location>
        <begin position="243"/>
        <end position="256"/>
    </location>
</feature>
<feature type="strand" evidence="7">
    <location>
        <begin position="259"/>
        <end position="261"/>
    </location>
</feature>
<feature type="helix" evidence="6">
    <location>
        <begin position="262"/>
        <end position="276"/>
    </location>
</feature>
<feature type="strand" evidence="6">
    <location>
        <begin position="282"/>
        <end position="289"/>
    </location>
</feature>
<feature type="strand" evidence="6">
    <location>
        <begin position="292"/>
        <end position="297"/>
    </location>
</feature>
<feature type="strand" evidence="6">
    <location>
        <begin position="304"/>
        <end position="312"/>
    </location>
</feature>
<feature type="strand" evidence="6">
    <location>
        <begin position="317"/>
        <end position="326"/>
    </location>
</feature>
<feature type="strand" evidence="6">
    <location>
        <begin position="332"/>
        <end position="347"/>
    </location>
</feature>
<feature type="strand" evidence="6">
    <location>
        <begin position="349"/>
        <end position="352"/>
    </location>
</feature>
<feature type="strand" evidence="6">
    <location>
        <begin position="368"/>
        <end position="370"/>
    </location>
</feature>
<feature type="strand" evidence="6">
    <location>
        <begin position="374"/>
        <end position="385"/>
    </location>
</feature>
<feature type="helix" evidence="6">
    <location>
        <begin position="386"/>
        <end position="390"/>
    </location>
</feature>
<feature type="strand" evidence="6">
    <location>
        <begin position="391"/>
        <end position="393"/>
    </location>
</feature>
<feature type="helix" evidence="6">
    <location>
        <begin position="394"/>
        <end position="396"/>
    </location>
</feature>
<feature type="helix" evidence="6">
    <location>
        <begin position="400"/>
        <end position="413"/>
    </location>
</feature>
<feature type="helix" evidence="6">
    <location>
        <begin position="419"/>
        <end position="433"/>
    </location>
</feature>
<feature type="strand" evidence="6">
    <location>
        <begin position="437"/>
        <end position="446"/>
    </location>
</feature>
<feature type="strand" evidence="6">
    <location>
        <begin position="450"/>
        <end position="454"/>
    </location>
</feature>
<feature type="strand" evidence="6">
    <location>
        <begin position="463"/>
        <end position="465"/>
    </location>
</feature>
<feature type="strand" evidence="6">
    <location>
        <begin position="471"/>
        <end position="479"/>
    </location>
</feature>
<evidence type="ECO:0000250" key="1"/>
<evidence type="ECO:0000250" key="2">
    <source>
        <dbReference type="UniProtKB" id="D0VWQ1"/>
    </source>
</evidence>
<evidence type="ECO:0000250" key="3">
    <source>
        <dbReference type="UniProtKB" id="Q00511"/>
    </source>
</evidence>
<evidence type="ECO:0000305" key="4"/>
<evidence type="ECO:0000305" key="5">
    <source ref="3"/>
</evidence>
<evidence type="ECO:0007829" key="6">
    <source>
        <dbReference type="PDB" id="7CMN"/>
    </source>
</evidence>
<evidence type="ECO:0007829" key="7">
    <source>
        <dbReference type="PDB" id="7CUC"/>
    </source>
</evidence>
<dbReference type="EC" id="4.1.1.97"/>
<dbReference type="EC" id="1.7.3.3"/>
<dbReference type="EMBL" id="AB048366">
    <property type="protein sequence ID" value="BAB20808.1"/>
    <property type="molecule type" value="Genomic_DNA"/>
</dbReference>
<dbReference type="EMBL" id="D49974">
    <property type="protein sequence ID" value="BAA08723.1"/>
    <property type="status" value="ALT_INIT"/>
    <property type="molecule type" value="Genomic_DNA"/>
</dbReference>
<dbReference type="PIR" id="JC4535">
    <property type="entry name" value="JC4535"/>
</dbReference>
<dbReference type="PDB" id="1J2G">
    <property type="method" value="X-ray"/>
    <property type="resolution" value="2.20 A"/>
    <property type="chains" value="A/B/C/D=171-489"/>
</dbReference>
<dbReference type="PDB" id="3WLV">
    <property type="method" value="X-ray"/>
    <property type="resolution" value="1.75 A"/>
    <property type="chains" value="A/B/C/D=178-489"/>
</dbReference>
<dbReference type="PDB" id="4XFP">
    <property type="method" value="X-ray"/>
    <property type="resolution" value="1.66 A"/>
    <property type="chains" value="A/B/C/D=178-494"/>
</dbReference>
<dbReference type="PDB" id="5AYJ">
    <property type="method" value="X-ray"/>
    <property type="resolution" value="2.05 A"/>
    <property type="chains" value="A/B/C/D=172-502"/>
</dbReference>
<dbReference type="PDB" id="5Y2P">
    <property type="method" value="X-ray"/>
    <property type="resolution" value="1.50 A"/>
    <property type="chains" value="A/B=178-489"/>
</dbReference>
<dbReference type="PDB" id="5Y52">
    <property type="method" value="X-ray"/>
    <property type="resolution" value="1.63 A"/>
    <property type="chains" value="A/B/C/D=172-502"/>
</dbReference>
<dbReference type="PDB" id="5YJ2">
    <property type="method" value="X-ray"/>
    <property type="resolution" value="1.71 A"/>
    <property type="chains" value="A/B/C/D=178-489"/>
</dbReference>
<dbReference type="PDB" id="5YJA">
    <property type="method" value="X-ray"/>
    <property type="resolution" value="1.65 A"/>
    <property type="chains" value="A/B/C/D=172-494"/>
</dbReference>
<dbReference type="PDB" id="5Z27">
    <property type="method" value="X-ray"/>
    <property type="resolution" value="1.60 A"/>
    <property type="chains" value="A/B=172-494"/>
</dbReference>
<dbReference type="PDB" id="5Z2B">
    <property type="method" value="X-ray"/>
    <property type="resolution" value="1.90 A"/>
    <property type="chains" value="A/B=172-494"/>
</dbReference>
<dbReference type="PDB" id="7CMN">
    <property type="method" value="X-ray"/>
    <property type="resolution" value="1.42 A"/>
    <property type="chains" value="A/B=177-489"/>
</dbReference>
<dbReference type="PDB" id="7CMQ">
    <property type="method" value="X-ray"/>
    <property type="resolution" value="1.65 A"/>
    <property type="chains" value="A/B=177-489"/>
</dbReference>
<dbReference type="PDB" id="7CUC">
    <property type="method" value="X-ray"/>
    <property type="resolution" value="1.44 A"/>
    <property type="chains" value="A/B=177-489"/>
</dbReference>
<dbReference type="PDB" id="7CUF">
    <property type="method" value="X-ray"/>
    <property type="resolution" value="1.46 A"/>
    <property type="chains" value="A/B=177-489"/>
</dbReference>
<dbReference type="PDB" id="7CUG">
    <property type="method" value="X-ray"/>
    <property type="resolution" value="1.62 A"/>
    <property type="chains" value="A/B=177-489"/>
</dbReference>
<dbReference type="PDBsum" id="1J2G"/>
<dbReference type="PDBsum" id="3WLV"/>
<dbReference type="PDBsum" id="4XFP"/>
<dbReference type="PDBsum" id="5AYJ"/>
<dbReference type="PDBsum" id="5Y2P"/>
<dbReference type="PDBsum" id="5Y52"/>
<dbReference type="PDBsum" id="5YJ2"/>
<dbReference type="PDBsum" id="5YJA"/>
<dbReference type="PDBsum" id="5Z27"/>
<dbReference type="PDBsum" id="5Z2B"/>
<dbReference type="PDBsum" id="7CMN"/>
<dbReference type="PDBsum" id="7CMQ"/>
<dbReference type="PDBsum" id="7CUC"/>
<dbReference type="PDBsum" id="7CUF"/>
<dbReference type="PDBsum" id="7CUG"/>
<dbReference type="SMR" id="Q45697"/>
<dbReference type="DrugBank" id="DB01875">
    <property type="generic name" value="8-azaxanthine"/>
</dbReference>
<dbReference type="DrugBank" id="DB05321">
    <property type="generic name" value="PEG-uricase"/>
</dbReference>
<dbReference type="UniPathway" id="UPA00394">
    <property type="reaction ID" value="UER00650"/>
</dbReference>
<dbReference type="UniPathway" id="UPA00394">
    <property type="reaction ID" value="UER00652"/>
</dbReference>
<dbReference type="EvolutionaryTrace" id="Q45697"/>
<dbReference type="GO" id="GO:0051997">
    <property type="term" value="F:2-oxo-4-hydroxy-4-carboxy-5-ureidoimidazoline decarboxylase activity"/>
    <property type="evidence" value="ECO:0007669"/>
    <property type="project" value="UniProtKB-EC"/>
</dbReference>
<dbReference type="GO" id="GO:0004846">
    <property type="term" value="F:urate oxidase activity"/>
    <property type="evidence" value="ECO:0007669"/>
    <property type="project" value="UniProtKB-EC"/>
</dbReference>
<dbReference type="GO" id="GO:0000255">
    <property type="term" value="P:allantoin metabolic process"/>
    <property type="evidence" value="ECO:0007669"/>
    <property type="project" value="InterPro"/>
</dbReference>
<dbReference type="GO" id="GO:0006144">
    <property type="term" value="P:purine nucleobase metabolic process"/>
    <property type="evidence" value="ECO:0007669"/>
    <property type="project" value="UniProtKB-KW"/>
</dbReference>
<dbReference type="GO" id="GO:0019628">
    <property type="term" value="P:urate catabolic process"/>
    <property type="evidence" value="ECO:0007669"/>
    <property type="project" value="UniProtKB-UniPathway"/>
</dbReference>
<dbReference type="CDD" id="cd00445">
    <property type="entry name" value="Uricase"/>
    <property type="match status" value="1"/>
</dbReference>
<dbReference type="Gene3D" id="1.10.3330.10">
    <property type="entry name" value="Oxo-4-hydroxy-4-carboxy-5-ureidoimidazoline decarboxylase"/>
    <property type="match status" value="1"/>
</dbReference>
<dbReference type="Gene3D" id="3.10.270.10">
    <property type="entry name" value="Urate Oxidase"/>
    <property type="match status" value="1"/>
</dbReference>
<dbReference type="InterPro" id="IPR018020">
    <property type="entry name" value="OHCU_decarboxylase"/>
</dbReference>
<dbReference type="InterPro" id="IPR017580">
    <property type="entry name" value="OHCU_decarboxylase-1"/>
</dbReference>
<dbReference type="InterPro" id="IPR036778">
    <property type="entry name" value="OHCU_decarboxylase_sf"/>
</dbReference>
<dbReference type="InterPro" id="IPR002042">
    <property type="entry name" value="Uricase"/>
</dbReference>
<dbReference type="InterPro" id="IPR019842">
    <property type="entry name" value="Uricase_CS"/>
</dbReference>
<dbReference type="NCBIfam" id="TIGR03164">
    <property type="entry name" value="UHCUDC"/>
    <property type="match status" value="1"/>
</dbReference>
<dbReference type="NCBIfam" id="TIGR03383">
    <property type="entry name" value="urate_oxi"/>
    <property type="match status" value="1"/>
</dbReference>
<dbReference type="PANTHER" id="PTHR43466">
    <property type="entry name" value="2-OXO-4-HYDROXY-4-CARBOXY-5-UREIDOIMIDAZOLINE DECARBOXYLASE-RELATED"/>
    <property type="match status" value="1"/>
</dbReference>
<dbReference type="PANTHER" id="PTHR43466:SF1">
    <property type="entry name" value="2-OXO-4-HYDROXY-4-CARBOXY-5-UREIDOIMIDAZOLINE DECARBOXYLASE-RELATED"/>
    <property type="match status" value="1"/>
</dbReference>
<dbReference type="Pfam" id="PF09349">
    <property type="entry name" value="OHCU_decarbox"/>
    <property type="match status" value="1"/>
</dbReference>
<dbReference type="Pfam" id="PF01014">
    <property type="entry name" value="Uricase"/>
    <property type="match status" value="2"/>
</dbReference>
<dbReference type="PRINTS" id="PR00093">
    <property type="entry name" value="URICASE"/>
</dbReference>
<dbReference type="SUPFAM" id="SSF55620">
    <property type="entry name" value="Tetrahydrobiopterin biosynthesis enzymes-like"/>
    <property type="match status" value="2"/>
</dbReference>
<dbReference type="SUPFAM" id="SSF158694">
    <property type="entry name" value="UraD-Like"/>
    <property type="match status" value="1"/>
</dbReference>
<dbReference type="PROSITE" id="PS00366">
    <property type="entry name" value="URICASE"/>
    <property type="match status" value="1"/>
</dbReference>
<keyword id="KW-0002">3D-structure</keyword>
<keyword id="KW-0210">Decarboxylase</keyword>
<keyword id="KW-0456">Lyase</keyword>
<keyword id="KW-0511">Multifunctional enzyme</keyword>
<keyword id="KW-0560">Oxidoreductase</keyword>
<keyword id="KW-0659">Purine metabolism</keyword>
<gene>
    <name type="primary">uao</name>
</gene>
<comment type="function">
    <text evidence="1">Catalyzes two steps in the degradation of uric acid, i.e. the oxidation of uric acid to 5-hydroxyisourate (HIU) and the stereoselective decarboxylation of 2-oxo-4-hydroxy-4-carboxy-5-ureidoimidazoline (OHCU) to (S)-allantoin (By similarity).</text>
</comment>
<comment type="catalytic activity">
    <reaction>
        <text>5-hydroxy-2-oxo-4-ureido-2,5-dihydro-1H-imidazole-5-carboxylate + H(+) = (S)-allantoin + CO2</text>
        <dbReference type="Rhea" id="RHEA:26301"/>
        <dbReference type="ChEBI" id="CHEBI:15378"/>
        <dbReference type="ChEBI" id="CHEBI:15678"/>
        <dbReference type="ChEBI" id="CHEBI:16526"/>
        <dbReference type="ChEBI" id="CHEBI:58639"/>
        <dbReference type="EC" id="4.1.1.97"/>
    </reaction>
</comment>
<comment type="catalytic activity">
    <reaction>
        <text>urate + O2 + H2O = 5-hydroxyisourate + H2O2</text>
        <dbReference type="Rhea" id="RHEA:21368"/>
        <dbReference type="ChEBI" id="CHEBI:15377"/>
        <dbReference type="ChEBI" id="CHEBI:15379"/>
        <dbReference type="ChEBI" id="CHEBI:16240"/>
        <dbReference type="ChEBI" id="CHEBI:17775"/>
        <dbReference type="ChEBI" id="CHEBI:18072"/>
        <dbReference type="EC" id="1.7.3.3"/>
    </reaction>
</comment>
<comment type="pathway">
    <text>Purine metabolism; urate degradation; (S)-allantoin from urate: step 1/3.</text>
</comment>
<comment type="pathway">
    <text>Purine metabolism; urate degradation; (S)-allantoin from urate: step 3/3.</text>
</comment>
<comment type="miscellaneous">
    <text>HIU and OHCU are unstable, they spontaneously decompose to form a racemic mixture of allantoin.</text>
</comment>
<comment type="similarity">
    <text evidence="4">In the N-terminal section; belongs to the OHCU decarboxylase family.</text>
</comment>
<comment type="similarity">
    <text evidence="4">In the C-terminal section; belongs to the uricase family.</text>
</comment>
<comment type="sequence caution" evidence="4">
    <conflict type="erroneous initiation">
        <sequence resource="EMBL-CDS" id="BAA08723"/>
    </conflict>
</comment>
<reference key="1">
    <citation type="submission" date="2000-09" db="EMBL/GenBank/DDBJ databases">
        <title>The full sequence of the gene encoding the diagnostic enzyme Bacillus uricase.</title>
        <authorList>
            <person name="Nishiya Y."/>
            <person name="Hibi T."/>
            <person name="Oda J."/>
        </authorList>
    </citation>
    <scope>NUCLEOTIDE SEQUENCE [GENOMIC DNA]</scope>
</reference>
<reference key="2">
    <citation type="journal article" date="1996" name="J. Biochem.">
        <title>Nucleotide sequence of the uricase gene from Bacillus sp. TB-90.</title>
        <authorList>
            <person name="Yamamoto K."/>
            <person name="Kojima Y."/>
            <person name="Kikuchi T."/>
            <person name="Shigyo T."/>
            <person name="Sugihara K."/>
            <person name="Takashio M."/>
            <person name="Emi S."/>
        </authorList>
    </citation>
    <scope>NUCLEOTIDE SEQUENCE [GENOMIC DNA] OF 25-502</scope>
</reference>
<reference key="3">
    <citation type="submission" date="2009-02" db="PDB data bank">
        <title>Crystal structure of urate oxidase from Bacillus sp.</title>
        <authorList>
            <consortium name="Mycobacterium tuberculosis structural genomics consortium (TB)"/>
        </authorList>
    </citation>
    <scope>X-RAY CRYSTALLOGRAPHY (2.2 ANGSTROMS) OF 171-489 IN COMPLEX WITH INHIBITOR 8-AZAXANTHINE</scope>
</reference>
<protein>
    <recommendedName>
        <fullName>Uric acid degradation bifunctional protein</fullName>
    </recommendedName>
    <domain>
        <recommendedName>
            <fullName>2-oxo-4-hydroxy-4-carboxy-5-ureidoimidazoline decarboxylase</fullName>
            <shortName>OHCU decarboxylase</shortName>
            <ecNumber>4.1.1.97</ecNumber>
        </recommendedName>
    </domain>
    <domain>
        <recommendedName>
            <fullName>Uricase</fullName>
            <ecNumber>1.7.3.3</ecNumber>
        </recommendedName>
        <alternativeName>
            <fullName>Urate oxidase</fullName>
        </alternativeName>
    </domain>
</protein>
<proteinExistence type="evidence at protein level"/>